<sequence>MPSLSKEAALVHEALVARGLETPLRPPVHEMDNETRKSLIAGHMTEIMQLLNLDLADDSLMETPHRIAKMYVDEIFSGLDYANFPKITLIENKMKVDEMVTVRDITLTSTCEHHFVTIDGKATVAYIPKDSVIGLSKINRIVQFFAQRPQVQERLTQQILIALQTLLGTNNVAVSIDAVHYCVKARGIRDATSATTTTSLGGLFKSSQNTRHEFLRAVRHHN</sequence>
<reference key="1">
    <citation type="journal article" date="2009" name="PLoS Genet.">
        <title>Organised genome dynamics in the Escherichia coli species results in highly diverse adaptive paths.</title>
        <authorList>
            <person name="Touchon M."/>
            <person name="Hoede C."/>
            <person name="Tenaillon O."/>
            <person name="Barbe V."/>
            <person name="Baeriswyl S."/>
            <person name="Bidet P."/>
            <person name="Bingen E."/>
            <person name="Bonacorsi S."/>
            <person name="Bouchier C."/>
            <person name="Bouvet O."/>
            <person name="Calteau A."/>
            <person name="Chiapello H."/>
            <person name="Clermont O."/>
            <person name="Cruveiller S."/>
            <person name="Danchin A."/>
            <person name="Diard M."/>
            <person name="Dossat C."/>
            <person name="Karoui M.E."/>
            <person name="Frapy E."/>
            <person name="Garry L."/>
            <person name="Ghigo J.M."/>
            <person name="Gilles A.M."/>
            <person name="Johnson J."/>
            <person name="Le Bouguenec C."/>
            <person name="Lescat M."/>
            <person name="Mangenot S."/>
            <person name="Martinez-Jehanne V."/>
            <person name="Matic I."/>
            <person name="Nassif X."/>
            <person name="Oztas S."/>
            <person name="Petit M.A."/>
            <person name="Pichon C."/>
            <person name="Rouy Z."/>
            <person name="Ruf C.S."/>
            <person name="Schneider D."/>
            <person name="Tourret J."/>
            <person name="Vacherie B."/>
            <person name="Vallenet D."/>
            <person name="Medigue C."/>
            <person name="Rocha E.P.C."/>
            <person name="Denamur E."/>
        </authorList>
    </citation>
    <scope>NUCLEOTIDE SEQUENCE [LARGE SCALE GENOMIC DNA]</scope>
    <source>
        <strain>UMN026 / ExPEC</strain>
    </source>
</reference>
<dbReference type="EC" id="3.5.4.16" evidence="1"/>
<dbReference type="EMBL" id="CU928163">
    <property type="protein sequence ID" value="CAR13673.1"/>
    <property type="molecule type" value="Genomic_DNA"/>
</dbReference>
<dbReference type="RefSeq" id="WP_001139613.1">
    <property type="nucleotide sequence ID" value="NC_011751.1"/>
</dbReference>
<dbReference type="RefSeq" id="YP_002413201.1">
    <property type="nucleotide sequence ID" value="NC_011751.1"/>
</dbReference>
<dbReference type="SMR" id="B7NCI3"/>
<dbReference type="STRING" id="585056.ECUMN_2487"/>
<dbReference type="GeneID" id="93775029"/>
<dbReference type="KEGG" id="eum:ECUMN_2487"/>
<dbReference type="PATRIC" id="fig|585056.7.peg.2667"/>
<dbReference type="HOGENOM" id="CLU_049768_3_2_6"/>
<dbReference type="UniPathway" id="UPA00848">
    <property type="reaction ID" value="UER00151"/>
</dbReference>
<dbReference type="Proteomes" id="UP000007097">
    <property type="component" value="Chromosome"/>
</dbReference>
<dbReference type="GO" id="GO:0005737">
    <property type="term" value="C:cytoplasm"/>
    <property type="evidence" value="ECO:0007669"/>
    <property type="project" value="TreeGrafter"/>
</dbReference>
<dbReference type="GO" id="GO:0005525">
    <property type="term" value="F:GTP binding"/>
    <property type="evidence" value="ECO:0007669"/>
    <property type="project" value="TreeGrafter"/>
</dbReference>
<dbReference type="GO" id="GO:0003934">
    <property type="term" value="F:GTP cyclohydrolase I activity"/>
    <property type="evidence" value="ECO:0007669"/>
    <property type="project" value="UniProtKB-UniRule"/>
</dbReference>
<dbReference type="GO" id="GO:0008270">
    <property type="term" value="F:zinc ion binding"/>
    <property type="evidence" value="ECO:0007669"/>
    <property type="project" value="UniProtKB-UniRule"/>
</dbReference>
<dbReference type="GO" id="GO:0006730">
    <property type="term" value="P:one-carbon metabolic process"/>
    <property type="evidence" value="ECO:0007669"/>
    <property type="project" value="UniProtKB-UniRule"/>
</dbReference>
<dbReference type="GO" id="GO:0006729">
    <property type="term" value="P:tetrahydrobiopterin biosynthetic process"/>
    <property type="evidence" value="ECO:0007669"/>
    <property type="project" value="TreeGrafter"/>
</dbReference>
<dbReference type="GO" id="GO:0046654">
    <property type="term" value="P:tetrahydrofolate biosynthetic process"/>
    <property type="evidence" value="ECO:0007669"/>
    <property type="project" value="UniProtKB-UniRule"/>
</dbReference>
<dbReference type="CDD" id="cd00642">
    <property type="entry name" value="GTP_cyclohydro1"/>
    <property type="match status" value="1"/>
</dbReference>
<dbReference type="FunFam" id="1.10.286.10:FF:000002">
    <property type="entry name" value="GTP cyclohydrolase 1"/>
    <property type="match status" value="1"/>
</dbReference>
<dbReference type="FunFam" id="3.30.1130.10:FF:000001">
    <property type="entry name" value="GTP cyclohydrolase 1"/>
    <property type="match status" value="1"/>
</dbReference>
<dbReference type="Gene3D" id="1.10.286.10">
    <property type="match status" value="1"/>
</dbReference>
<dbReference type="Gene3D" id="3.30.1130.10">
    <property type="match status" value="1"/>
</dbReference>
<dbReference type="HAMAP" id="MF_00223">
    <property type="entry name" value="FolE"/>
    <property type="match status" value="1"/>
</dbReference>
<dbReference type="InterPro" id="IPR043133">
    <property type="entry name" value="GTP-CH-I_C/QueF"/>
</dbReference>
<dbReference type="InterPro" id="IPR043134">
    <property type="entry name" value="GTP-CH-I_N"/>
</dbReference>
<dbReference type="InterPro" id="IPR001474">
    <property type="entry name" value="GTP_CycHdrlase_I"/>
</dbReference>
<dbReference type="InterPro" id="IPR018234">
    <property type="entry name" value="GTP_CycHdrlase_I_CS"/>
</dbReference>
<dbReference type="InterPro" id="IPR020602">
    <property type="entry name" value="GTP_CycHdrlase_I_dom"/>
</dbReference>
<dbReference type="NCBIfam" id="TIGR00063">
    <property type="entry name" value="folE"/>
    <property type="match status" value="1"/>
</dbReference>
<dbReference type="NCBIfam" id="NF006824">
    <property type="entry name" value="PRK09347.1-1"/>
    <property type="match status" value="1"/>
</dbReference>
<dbReference type="NCBIfam" id="NF006826">
    <property type="entry name" value="PRK09347.1-3"/>
    <property type="match status" value="1"/>
</dbReference>
<dbReference type="PANTHER" id="PTHR11109:SF7">
    <property type="entry name" value="GTP CYCLOHYDROLASE 1"/>
    <property type="match status" value="1"/>
</dbReference>
<dbReference type="PANTHER" id="PTHR11109">
    <property type="entry name" value="GTP CYCLOHYDROLASE I"/>
    <property type="match status" value="1"/>
</dbReference>
<dbReference type="Pfam" id="PF01227">
    <property type="entry name" value="GTP_cyclohydroI"/>
    <property type="match status" value="1"/>
</dbReference>
<dbReference type="SUPFAM" id="SSF55620">
    <property type="entry name" value="Tetrahydrobiopterin biosynthesis enzymes-like"/>
    <property type="match status" value="1"/>
</dbReference>
<dbReference type="PROSITE" id="PS00859">
    <property type="entry name" value="GTP_CYCLOHYDROL_1_1"/>
    <property type="match status" value="1"/>
</dbReference>
<dbReference type="PROSITE" id="PS00860">
    <property type="entry name" value="GTP_CYCLOHYDROL_1_2"/>
    <property type="match status" value="1"/>
</dbReference>
<comment type="catalytic activity">
    <reaction evidence="1">
        <text>GTP + H2O = 7,8-dihydroneopterin 3'-triphosphate + formate + H(+)</text>
        <dbReference type="Rhea" id="RHEA:17473"/>
        <dbReference type="ChEBI" id="CHEBI:15377"/>
        <dbReference type="ChEBI" id="CHEBI:15378"/>
        <dbReference type="ChEBI" id="CHEBI:15740"/>
        <dbReference type="ChEBI" id="CHEBI:37565"/>
        <dbReference type="ChEBI" id="CHEBI:58462"/>
        <dbReference type="EC" id="3.5.4.16"/>
    </reaction>
</comment>
<comment type="pathway">
    <text evidence="1">Cofactor biosynthesis; 7,8-dihydroneopterin triphosphate biosynthesis; 7,8-dihydroneopterin triphosphate from GTP: step 1/1.</text>
</comment>
<comment type="subunit">
    <text evidence="1">Homomer.</text>
</comment>
<comment type="similarity">
    <text evidence="1">Belongs to the GTP cyclohydrolase I family.</text>
</comment>
<evidence type="ECO:0000255" key="1">
    <source>
        <dbReference type="HAMAP-Rule" id="MF_00223"/>
    </source>
</evidence>
<organism>
    <name type="scientific">Escherichia coli O17:K52:H18 (strain UMN026 / ExPEC)</name>
    <dbReference type="NCBI Taxonomy" id="585056"/>
    <lineage>
        <taxon>Bacteria</taxon>
        <taxon>Pseudomonadati</taxon>
        <taxon>Pseudomonadota</taxon>
        <taxon>Gammaproteobacteria</taxon>
        <taxon>Enterobacterales</taxon>
        <taxon>Enterobacteriaceae</taxon>
        <taxon>Escherichia</taxon>
    </lineage>
</organism>
<gene>
    <name evidence="1" type="primary">folE</name>
    <name type="ordered locus">ECUMN_2487</name>
</gene>
<keyword id="KW-0378">Hydrolase</keyword>
<keyword id="KW-0479">Metal-binding</keyword>
<keyword id="KW-0554">One-carbon metabolism</keyword>
<keyword id="KW-0862">Zinc</keyword>
<name>GCH1_ECOLU</name>
<feature type="chain" id="PRO_1000190073" description="GTP cyclohydrolase 1">
    <location>
        <begin position="1"/>
        <end position="222"/>
    </location>
</feature>
<feature type="binding site" evidence="1">
    <location>
        <position position="111"/>
    </location>
    <ligand>
        <name>Zn(2+)</name>
        <dbReference type="ChEBI" id="CHEBI:29105"/>
    </ligand>
</feature>
<feature type="binding site" evidence="1">
    <location>
        <position position="114"/>
    </location>
    <ligand>
        <name>Zn(2+)</name>
        <dbReference type="ChEBI" id="CHEBI:29105"/>
    </ligand>
</feature>
<feature type="binding site" evidence="1">
    <location>
        <position position="182"/>
    </location>
    <ligand>
        <name>Zn(2+)</name>
        <dbReference type="ChEBI" id="CHEBI:29105"/>
    </ligand>
</feature>
<accession>B7NCI3</accession>
<proteinExistence type="inferred from homology"/>
<protein>
    <recommendedName>
        <fullName evidence="1">GTP cyclohydrolase 1</fullName>
        <ecNumber evidence="1">3.5.4.16</ecNumber>
    </recommendedName>
    <alternativeName>
        <fullName evidence="1">GTP cyclohydrolase I</fullName>
        <shortName evidence="1">GTP-CH-I</shortName>
    </alternativeName>
</protein>